<comment type="function">
    <text evidence="1">Catalyzes the synthesis of the hydroxymethylpyrimidine phosphate (HMP-P) moiety of thiamine from aminoimidazole ribotide (AIR) in a radical S-adenosyl-L-methionine (SAM)-dependent reaction.</text>
</comment>
<comment type="catalytic activity">
    <reaction evidence="1">
        <text>5-amino-1-(5-phospho-beta-D-ribosyl)imidazole + S-adenosyl-L-methionine = 4-amino-2-methyl-5-(phosphooxymethyl)pyrimidine + CO + 5'-deoxyadenosine + formate + L-methionine + 3 H(+)</text>
        <dbReference type="Rhea" id="RHEA:24840"/>
        <dbReference type="ChEBI" id="CHEBI:15378"/>
        <dbReference type="ChEBI" id="CHEBI:15740"/>
        <dbReference type="ChEBI" id="CHEBI:17245"/>
        <dbReference type="ChEBI" id="CHEBI:17319"/>
        <dbReference type="ChEBI" id="CHEBI:57844"/>
        <dbReference type="ChEBI" id="CHEBI:58354"/>
        <dbReference type="ChEBI" id="CHEBI:59789"/>
        <dbReference type="ChEBI" id="CHEBI:137981"/>
        <dbReference type="EC" id="4.1.99.17"/>
    </reaction>
</comment>
<comment type="cofactor">
    <cofactor evidence="1">
        <name>[4Fe-4S] cluster</name>
        <dbReference type="ChEBI" id="CHEBI:49883"/>
    </cofactor>
    <text evidence="1">Binds 1 [4Fe-4S] cluster per subunit. The cluster is coordinated with 3 cysteines and an exchangeable S-adenosyl-L-methionine.</text>
</comment>
<comment type="pathway">
    <text evidence="1">Cofactor biosynthesis; thiamine diphosphate biosynthesis.</text>
</comment>
<comment type="similarity">
    <text evidence="1">Belongs to the ThiC family.</text>
</comment>
<sequence>MKQSVSAEQIELKSSLPGSKKVYVDGTREGMKVPMREIEQSDTNGVQNPPIRVYDTSGPYTDPEYKVELEKGLQAPRHSWTLGRGDVEAYEGREIKPEDDGVKVASKHTPVFPQMDRKPLRAKQGANVSQMHYARNGIITSEMEYVAIREGVEPEFVRKEIAEGRAILPANINHPEAEPMIIGRNFHVKVNANIGNSAVSSSIAEEVEKMTWATRWGADTIMDLSTGKNIHTTREWIIRNAPVPVGTVPIYQALEKVNGIAEDLTWEVYRDTLIEQAEQGVDYFTIHAGVLLRYIPITAKRMTGIVSRGGSIMAQWCLFHHKENFLYTHFEEICEIMKQYDVSFSLGDGLRPGSIADANDEAQFSELETLGELTKIAWKHDVQVMIEGPGHVPMHLIKENMEKELDICQGAPFYTLGPLTTDIAPGYDHITSAIGAAMIGWFGTAMLCYVTPKEHLGLPNKDDVREGVITYKIAAHAADLAKGHKTAHQRDDALSKARFEFRWRDQFNLSLDPERAMEYHDETLPAEGAKTAHFCSMCGPKFCSMRISHDIREYAKENDLETTEAIEKGMKEKAVEFKETGSHLYQ</sequence>
<feature type="chain" id="PRO_1000093189" description="Phosphomethylpyrimidine synthase">
    <location>
        <begin position="1"/>
        <end position="586"/>
    </location>
</feature>
<feature type="region of interest" description="Disordered" evidence="2">
    <location>
        <begin position="1"/>
        <end position="58"/>
    </location>
</feature>
<feature type="compositionally biased region" description="Basic and acidic residues" evidence="2">
    <location>
        <begin position="22"/>
        <end position="39"/>
    </location>
</feature>
<feature type="binding site" evidence="1">
    <location>
        <position position="193"/>
    </location>
    <ligand>
        <name>substrate</name>
    </ligand>
</feature>
<feature type="binding site" evidence="1">
    <location>
        <position position="222"/>
    </location>
    <ligand>
        <name>substrate</name>
    </ligand>
</feature>
<feature type="binding site" evidence="1">
    <location>
        <position position="251"/>
    </location>
    <ligand>
        <name>substrate</name>
    </ligand>
</feature>
<feature type="binding site" evidence="1">
    <location>
        <position position="287"/>
    </location>
    <ligand>
        <name>substrate</name>
    </ligand>
</feature>
<feature type="binding site" evidence="1">
    <location>
        <begin position="307"/>
        <end position="309"/>
    </location>
    <ligand>
        <name>substrate</name>
    </ligand>
</feature>
<feature type="binding site" evidence="1">
    <location>
        <begin position="348"/>
        <end position="351"/>
    </location>
    <ligand>
        <name>substrate</name>
    </ligand>
</feature>
<feature type="binding site" evidence="1">
    <location>
        <position position="387"/>
    </location>
    <ligand>
        <name>substrate</name>
    </ligand>
</feature>
<feature type="binding site" evidence="1">
    <location>
        <position position="391"/>
    </location>
    <ligand>
        <name>Zn(2+)</name>
        <dbReference type="ChEBI" id="CHEBI:29105"/>
    </ligand>
</feature>
<feature type="binding site" evidence="1">
    <location>
        <position position="414"/>
    </location>
    <ligand>
        <name>substrate</name>
    </ligand>
</feature>
<feature type="binding site" evidence="1">
    <location>
        <position position="455"/>
    </location>
    <ligand>
        <name>Zn(2+)</name>
        <dbReference type="ChEBI" id="CHEBI:29105"/>
    </ligand>
</feature>
<feature type="binding site" evidence="1">
    <location>
        <position position="535"/>
    </location>
    <ligand>
        <name>[4Fe-4S] cluster</name>
        <dbReference type="ChEBI" id="CHEBI:49883"/>
        <note>4Fe-4S-S-AdoMet</note>
    </ligand>
</feature>
<feature type="binding site" evidence="1">
    <location>
        <position position="538"/>
    </location>
    <ligand>
        <name>[4Fe-4S] cluster</name>
        <dbReference type="ChEBI" id="CHEBI:49883"/>
        <note>4Fe-4S-S-AdoMet</note>
    </ligand>
</feature>
<feature type="binding site" evidence="1">
    <location>
        <position position="543"/>
    </location>
    <ligand>
        <name>[4Fe-4S] cluster</name>
        <dbReference type="ChEBI" id="CHEBI:49883"/>
        <note>4Fe-4S-S-AdoMet</note>
    </ligand>
</feature>
<name>THIC_BACMK</name>
<gene>
    <name evidence="1" type="primary">thiC</name>
    <name type="ordered locus">BcerKBAB4_5018</name>
</gene>
<organism>
    <name type="scientific">Bacillus mycoides (strain KBAB4)</name>
    <name type="common">Bacillus weihenstephanensis</name>
    <dbReference type="NCBI Taxonomy" id="315730"/>
    <lineage>
        <taxon>Bacteria</taxon>
        <taxon>Bacillati</taxon>
        <taxon>Bacillota</taxon>
        <taxon>Bacilli</taxon>
        <taxon>Bacillales</taxon>
        <taxon>Bacillaceae</taxon>
        <taxon>Bacillus</taxon>
        <taxon>Bacillus cereus group</taxon>
    </lineage>
</organism>
<keyword id="KW-0004">4Fe-4S</keyword>
<keyword id="KW-0408">Iron</keyword>
<keyword id="KW-0411">Iron-sulfur</keyword>
<keyword id="KW-0456">Lyase</keyword>
<keyword id="KW-0479">Metal-binding</keyword>
<keyword id="KW-0949">S-adenosyl-L-methionine</keyword>
<keyword id="KW-0784">Thiamine biosynthesis</keyword>
<keyword id="KW-0862">Zinc</keyword>
<accession>A9VR68</accession>
<evidence type="ECO:0000255" key="1">
    <source>
        <dbReference type="HAMAP-Rule" id="MF_00089"/>
    </source>
</evidence>
<evidence type="ECO:0000256" key="2">
    <source>
        <dbReference type="SAM" id="MobiDB-lite"/>
    </source>
</evidence>
<dbReference type="EC" id="4.1.99.17" evidence="1"/>
<dbReference type="EMBL" id="CP000903">
    <property type="protein sequence ID" value="ABY46164.1"/>
    <property type="molecule type" value="Genomic_DNA"/>
</dbReference>
<dbReference type="RefSeq" id="WP_002068339.1">
    <property type="nucleotide sequence ID" value="NC_010184.1"/>
</dbReference>
<dbReference type="SMR" id="A9VR68"/>
<dbReference type="GeneID" id="66265237"/>
<dbReference type="KEGG" id="bwe:BcerKBAB4_5018"/>
<dbReference type="eggNOG" id="COG0422">
    <property type="taxonomic scope" value="Bacteria"/>
</dbReference>
<dbReference type="HOGENOM" id="CLU_013181_2_1_9"/>
<dbReference type="UniPathway" id="UPA00060"/>
<dbReference type="Proteomes" id="UP000002154">
    <property type="component" value="Chromosome"/>
</dbReference>
<dbReference type="GO" id="GO:0005829">
    <property type="term" value="C:cytosol"/>
    <property type="evidence" value="ECO:0007669"/>
    <property type="project" value="TreeGrafter"/>
</dbReference>
<dbReference type="GO" id="GO:0051539">
    <property type="term" value="F:4 iron, 4 sulfur cluster binding"/>
    <property type="evidence" value="ECO:0007669"/>
    <property type="project" value="UniProtKB-KW"/>
</dbReference>
<dbReference type="GO" id="GO:0016830">
    <property type="term" value="F:carbon-carbon lyase activity"/>
    <property type="evidence" value="ECO:0007669"/>
    <property type="project" value="InterPro"/>
</dbReference>
<dbReference type="GO" id="GO:0008270">
    <property type="term" value="F:zinc ion binding"/>
    <property type="evidence" value="ECO:0007669"/>
    <property type="project" value="UniProtKB-UniRule"/>
</dbReference>
<dbReference type="GO" id="GO:0009228">
    <property type="term" value="P:thiamine biosynthetic process"/>
    <property type="evidence" value="ECO:0007669"/>
    <property type="project" value="UniProtKB-KW"/>
</dbReference>
<dbReference type="GO" id="GO:0009229">
    <property type="term" value="P:thiamine diphosphate biosynthetic process"/>
    <property type="evidence" value="ECO:0007669"/>
    <property type="project" value="UniProtKB-UniRule"/>
</dbReference>
<dbReference type="FunFam" id="3.20.20.540:FF:000001">
    <property type="entry name" value="Phosphomethylpyrimidine synthase"/>
    <property type="match status" value="1"/>
</dbReference>
<dbReference type="Gene3D" id="6.10.250.620">
    <property type="match status" value="1"/>
</dbReference>
<dbReference type="Gene3D" id="3.20.20.540">
    <property type="entry name" value="Radical SAM ThiC family, central domain"/>
    <property type="match status" value="1"/>
</dbReference>
<dbReference type="HAMAP" id="MF_00089">
    <property type="entry name" value="ThiC"/>
    <property type="match status" value="1"/>
</dbReference>
<dbReference type="InterPro" id="IPR037509">
    <property type="entry name" value="ThiC"/>
</dbReference>
<dbReference type="InterPro" id="IPR025747">
    <property type="entry name" value="ThiC-associated_dom"/>
</dbReference>
<dbReference type="InterPro" id="IPR038521">
    <property type="entry name" value="ThiC/Bza_core_dom"/>
</dbReference>
<dbReference type="InterPro" id="IPR002817">
    <property type="entry name" value="ThiC/BzaA/B"/>
</dbReference>
<dbReference type="NCBIfam" id="NF006763">
    <property type="entry name" value="PRK09284.1"/>
    <property type="match status" value="1"/>
</dbReference>
<dbReference type="NCBIfam" id="NF009895">
    <property type="entry name" value="PRK13352.1"/>
    <property type="match status" value="1"/>
</dbReference>
<dbReference type="NCBIfam" id="TIGR00190">
    <property type="entry name" value="thiC"/>
    <property type="match status" value="1"/>
</dbReference>
<dbReference type="PANTHER" id="PTHR30557:SF1">
    <property type="entry name" value="PHOSPHOMETHYLPYRIMIDINE SYNTHASE, CHLOROPLASTIC"/>
    <property type="match status" value="1"/>
</dbReference>
<dbReference type="PANTHER" id="PTHR30557">
    <property type="entry name" value="THIAMINE BIOSYNTHESIS PROTEIN THIC"/>
    <property type="match status" value="1"/>
</dbReference>
<dbReference type="Pfam" id="PF13667">
    <property type="entry name" value="ThiC-associated"/>
    <property type="match status" value="1"/>
</dbReference>
<dbReference type="Pfam" id="PF01964">
    <property type="entry name" value="ThiC_Rad_SAM"/>
    <property type="match status" value="1"/>
</dbReference>
<dbReference type="SFLD" id="SFLDF00407">
    <property type="entry name" value="phosphomethylpyrimidine_syntha"/>
    <property type="match status" value="1"/>
</dbReference>
<dbReference type="SFLD" id="SFLDG01114">
    <property type="entry name" value="phosphomethylpyrimidine_syntha"/>
    <property type="match status" value="1"/>
</dbReference>
<dbReference type="SFLD" id="SFLDS00113">
    <property type="entry name" value="Radical_SAM_Phosphomethylpyrim"/>
    <property type="match status" value="1"/>
</dbReference>
<reference key="1">
    <citation type="journal article" date="2008" name="Chem. Biol. Interact.">
        <title>Extending the Bacillus cereus group genomics to putative food-borne pathogens of different toxicity.</title>
        <authorList>
            <person name="Lapidus A."/>
            <person name="Goltsman E."/>
            <person name="Auger S."/>
            <person name="Galleron N."/>
            <person name="Segurens B."/>
            <person name="Dossat C."/>
            <person name="Land M.L."/>
            <person name="Broussolle V."/>
            <person name="Brillard J."/>
            <person name="Guinebretiere M.-H."/>
            <person name="Sanchis V."/>
            <person name="Nguen-the C."/>
            <person name="Lereclus D."/>
            <person name="Richardson P."/>
            <person name="Wincker P."/>
            <person name="Weissenbach J."/>
            <person name="Ehrlich S.D."/>
            <person name="Sorokin A."/>
        </authorList>
    </citation>
    <scope>NUCLEOTIDE SEQUENCE [LARGE SCALE GENOMIC DNA]</scope>
    <source>
        <strain>KBAB4</strain>
    </source>
</reference>
<proteinExistence type="inferred from homology"/>
<protein>
    <recommendedName>
        <fullName evidence="1">Phosphomethylpyrimidine synthase</fullName>
        <ecNumber evidence="1">4.1.99.17</ecNumber>
    </recommendedName>
    <alternativeName>
        <fullName evidence="1">Hydroxymethylpyrimidine phosphate synthase</fullName>
        <shortName evidence="1">HMP-P synthase</shortName>
        <shortName evidence="1">HMP-phosphate synthase</shortName>
        <shortName evidence="1">HMPP synthase</shortName>
    </alternativeName>
    <alternativeName>
        <fullName evidence="1">Thiamine biosynthesis protein ThiC</fullName>
    </alternativeName>
</protein>